<reference key="1">
    <citation type="submission" date="1995-03" db="EMBL/GenBank/DDBJ databases">
        <authorList>
            <person name="Jones M.L."/>
        </authorList>
    </citation>
    <scope>NUCLEOTIDE SEQUENCE [MRNA]</scope>
    <source>
        <strain>Long Evans</strain>
        <tissue>Lung</tissue>
    </source>
</reference>
<comment type="function">
    <text evidence="2">Chemotactic activity for lymphocytes but not for monocytes or neutrophils. In thymus, mediates medullary accumulation of thymic dendritic cells and contributes to regulatoy T cell development, playing a role in self-tolerance establishment.</text>
</comment>
<comment type="subcellular location">
    <subcellularLocation>
        <location evidence="1">Secreted</location>
    </subcellularLocation>
</comment>
<comment type="similarity">
    <text evidence="5">Belongs to the intercrine gamma family.</text>
</comment>
<protein>
    <recommendedName>
        <fullName>Lymphotactin</fullName>
    </recommendedName>
    <alternativeName>
        <fullName>C motif chemokine 1</fullName>
    </alternativeName>
    <alternativeName>
        <fullName>Cytokine SCM-1</fullName>
    </alternativeName>
    <alternativeName>
        <fullName>Small-inducible cytokine C1</fullName>
    </alternativeName>
</protein>
<proteinExistence type="inferred from homology"/>
<feature type="signal peptide" evidence="3">
    <location>
        <begin position="1"/>
        <end position="21"/>
    </location>
</feature>
<feature type="chain" id="PRO_0000005250" description="Lymphotactin">
    <location>
        <begin position="22"/>
        <end position="114"/>
    </location>
</feature>
<feature type="region of interest" description="Disordered" evidence="4">
    <location>
        <begin position="87"/>
        <end position="114"/>
    </location>
</feature>
<feature type="compositionally biased region" description="Polar residues" evidence="4">
    <location>
        <begin position="98"/>
        <end position="114"/>
    </location>
</feature>
<feature type="disulfide bond" evidence="3">
    <location>
        <begin position="32"/>
        <end position="69"/>
    </location>
</feature>
<name>XCL1_RAT</name>
<keyword id="KW-0145">Chemotaxis</keyword>
<keyword id="KW-0202">Cytokine</keyword>
<keyword id="KW-1015">Disulfide bond</keyword>
<keyword id="KW-1185">Reference proteome</keyword>
<keyword id="KW-0964">Secreted</keyword>
<keyword id="KW-0732">Signal</keyword>
<accession>P51672</accession>
<organism>
    <name type="scientific">Rattus norvegicus</name>
    <name type="common">Rat</name>
    <dbReference type="NCBI Taxonomy" id="10116"/>
    <lineage>
        <taxon>Eukaryota</taxon>
        <taxon>Metazoa</taxon>
        <taxon>Chordata</taxon>
        <taxon>Craniata</taxon>
        <taxon>Vertebrata</taxon>
        <taxon>Euteleostomi</taxon>
        <taxon>Mammalia</taxon>
        <taxon>Eutheria</taxon>
        <taxon>Euarchontoglires</taxon>
        <taxon>Glires</taxon>
        <taxon>Rodentia</taxon>
        <taxon>Myomorpha</taxon>
        <taxon>Muroidea</taxon>
        <taxon>Muridae</taxon>
        <taxon>Murinae</taxon>
        <taxon>Rattus</taxon>
    </lineage>
</organism>
<sequence>MRLLLLTFLGVCCFAAWVVEGVGTEVLQESICVSLRTQRLPVQKIKTYTIKEGAMRAVIFVTKRGLRICADPQAKWVKTAIKTVDGRASASKSKAETIPTQAQRSASTAVTLTG</sequence>
<dbReference type="EMBL" id="U23377">
    <property type="protein sequence ID" value="AAA69478.1"/>
    <property type="molecule type" value="mRNA"/>
</dbReference>
<dbReference type="RefSeq" id="NP_599188.1">
    <property type="nucleotide sequence ID" value="NM_134361.1"/>
</dbReference>
<dbReference type="SMR" id="P51672"/>
<dbReference type="FunCoup" id="P51672">
    <property type="interactions" value="228"/>
</dbReference>
<dbReference type="STRING" id="10116.ENSRNOP00000003976"/>
<dbReference type="PhosphoSitePlus" id="P51672"/>
<dbReference type="PaxDb" id="10116-ENSRNOP00000003976"/>
<dbReference type="GeneID" id="171371"/>
<dbReference type="KEGG" id="rno:171371"/>
<dbReference type="UCSC" id="RGD:620452">
    <property type="organism name" value="rat"/>
</dbReference>
<dbReference type="AGR" id="RGD:620452"/>
<dbReference type="CTD" id="6375"/>
<dbReference type="RGD" id="620452">
    <property type="gene designation" value="Xcl1"/>
</dbReference>
<dbReference type="eggNOG" id="ENOG502S6ZP">
    <property type="taxonomic scope" value="Eukaryota"/>
</dbReference>
<dbReference type="InParanoid" id="P51672"/>
<dbReference type="OrthoDB" id="9906867at2759"/>
<dbReference type="PhylomeDB" id="P51672"/>
<dbReference type="Reactome" id="R-RNO-380108">
    <property type="pathway name" value="Chemokine receptors bind chemokines"/>
</dbReference>
<dbReference type="Reactome" id="R-RNO-416476">
    <property type="pathway name" value="G alpha (q) signalling events"/>
</dbReference>
<dbReference type="PRO" id="PR:P51672"/>
<dbReference type="Proteomes" id="UP000002494">
    <property type="component" value="Unplaced"/>
</dbReference>
<dbReference type="GO" id="GO:0005615">
    <property type="term" value="C:extracellular space"/>
    <property type="evidence" value="ECO:0000266"/>
    <property type="project" value="RGD"/>
</dbReference>
<dbReference type="GO" id="GO:0048020">
    <property type="term" value="F:CCR chemokine receptor binding"/>
    <property type="evidence" value="ECO:0000318"/>
    <property type="project" value="GO_Central"/>
</dbReference>
<dbReference type="GO" id="GO:0008009">
    <property type="term" value="F:chemokine activity"/>
    <property type="evidence" value="ECO:0000266"/>
    <property type="project" value="RGD"/>
</dbReference>
<dbReference type="GO" id="GO:0042379">
    <property type="term" value="F:chemokine receptor binding"/>
    <property type="evidence" value="ECO:0000266"/>
    <property type="project" value="RGD"/>
</dbReference>
<dbReference type="GO" id="GO:0042803">
    <property type="term" value="F:protein homodimerization activity"/>
    <property type="evidence" value="ECO:0000266"/>
    <property type="project" value="RGD"/>
</dbReference>
<dbReference type="GO" id="GO:0061844">
    <property type="term" value="P:antimicrobial humoral immune response mediated by antimicrobial peptide"/>
    <property type="evidence" value="ECO:0000318"/>
    <property type="project" value="GO_Central"/>
</dbReference>
<dbReference type="GO" id="GO:0060326">
    <property type="term" value="P:cell chemotaxis"/>
    <property type="evidence" value="ECO:0000318"/>
    <property type="project" value="GO_Central"/>
</dbReference>
<dbReference type="GO" id="GO:0007267">
    <property type="term" value="P:cell-cell signaling"/>
    <property type="evidence" value="ECO:0000266"/>
    <property type="project" value="RGD"/>
</dbReference>
<dbReference type="GO" id="GO:0071353">
    <property type="term" value="P:cellular response to interleukin-4"/>
    <property type="evidence" value="ECO:0000266"/>
    <property type="project" value="RGD"/>
</dbReference>
<dbReference type="GO" id="GO:0071560">
    <property type="term" value="P:cellular response to transforming growth factor beta stimulus"/>
    <property type="evidence" value="ECO:0000266"/>
    <property type="project" value="RGD"/>
</dbReference>
<dbReference type="GO" id="GO:0070098">
    <property type="term" value="P:chemokine-mediated signaling pathway"/>
    <property type="evidence" value="ECO:0000318"/>
    <property type="project" value="GO_Central"/>
</dbReference>
<dbReference type="GO" id="GO:0006935">
    <property type="term" value="P:chemotaxis"/>
    <property type="evidence" value="ECO:0000266"/>
    <property type="project" value="RGD"/>
</dbReference>
<dbReference type="GO" id="GO:0051649">
    <property type="term" value="P:establishment of localization in cell"/>
    <property type="evidence" value="ECO:0000266"/>
    <property type="project" value="RGD"/>
</dbReference>
<dbReference type="GO" id="GO:0006954">
    <property type="term" value="P:inflammatory response"/>
    <property type="evidence" value="ECO:0000318"/>
    <property type="project" value="GO_Central"/>
</dbReference>
<dbReference type="GO" id="GO:0035782">
    <property type="term" value="P:mature natural killer cell chemotaxis"/>
    <property type="evidence" value="ECO:0000266"/>
    <property type="project" value="RGD"/>
</dbReference>
<dbReference type="GO" id="GO:2000562">
    <property type="term" value="P:negative regulation of CD4-positive, alpha-beta T cell proliferation"/>
    <property type="evidence" value="ECO:0000266"/>
    <property type="project" value="RGD"/>
</dbReference>
<dbReference type="GO" id="GO:0045892">
    <property type="term" value="P:negative regulation of DNA-templated transcription"/>
    <property type="evidence" value="ECO:0000266"/>
    <property type="project" value="RGD"/>
</dbReference>
<dbReference type="GO" id="GO:0032703">
    <property type="term" value="P:negative regulation of interleukin-2 production"/>
    <property type="evidence" value="ECO:0000266"/>
    <property type="project" value="RGD"/>
</dbReference>
<dbReference type="GO" id="GO:0002725">
    <property type="term" value="P:negative regulation of T cell cytokine production"/>
    <property type="evidence" value="ECO:0000266"/>
    <property type="project" value="RGD"/>
</dbReference>
<dbReference type="GO" id="GO:2000518">
    <property type="term" value="P:negative regulation of T-helper 1 cell activation"/>
    <property type="evidence" value="ECO:0000266"/>
    <property type="project" value="RGD"/>
</dbReference>
<dbReference type="GO" id="GO:0032689">
    <property type="term" value="P:negative regulation of type II interferon production"/>
    <property type="evidence" value="ECO:0000266"/>
    <property type="project" value="RGD"/>
</dbReference>
<dbReference type="GO" id="GO:2000538">
    <property type="term" value="P:positive regulation of B cell chemotaxis"/>
    <property type="evidence" value="ECO:0000266"/>
    <property type="project" value="RGD"/>
</dbReference>
<dbReference type="GO" id="GO:2000563">
    <property type="term" value="P:positive regulation of CD4-positive, alpha-beta T cell proliferation"/>
    <property type="evidence" value="ECO:0000266"/>
    <property type="project" value="RGD"/>
</dbReference>
<dbReference type="GO" id="GO:2000566">
    <property type="term" value="P:positive regulation of CD8-positive, alpha-beta T cell proliferation"/>
    <property type="evidence" value="ECO:0000266"/>
    <property type="project" value="RGD"/>
</dbReference>
<dbReference type="GO" id="GO:0030335">
    <property type="term" value="P:positive regulation of cell migration"/>
    <property type="evidence" value="ECO:0000318"/>
    <property type="project" value="GO_Central"/>
</dbReference>
<dbReference type="GO" id="GO:2000513">
    <property type="term" value="P:positive regulation of granzyme A production"/>
    <property type="evidence" value="ECO:0000266"/>
    <property type="project" value="RGD"/>
</dbReference>
<dbReference type="GO" id="GO:0071663">
    <property type="term" value="P:positive regulation of granzyme B production"/>
    <property type="evidence" value="ECO:0000266"/>
    <property type="project" value="RGD"/>
</dbReference>
<dbReference type="GO" id="GO:2000558">
    <property type="term" value="P:positive regulation of immunoglobulin production in mucosal tissue"/>
    <property type="evidence" value="ECO:0000266"/>
    <property type="project" value="RGD"/>
</dbReference>
<dbReference type="GO" id="GO:0032733">
    <property type="term" value="P:positive regulation of interleukin-10 production"/>
    <property type="evidence" value="ECO:0000266"/>
    <property type="project" value="RGD"/>
</dbReference>
<dbReference type="GO" id="GO:0002690">
    <property type="term" value="P:positive regulation of leukocyte chemotaxis"/>
    <property type="evidence" value="ECO:0000266"/>
    <property type="project" value="RGD"/>
</dbReference>
<dbReference type="GO" id="GO:2000503">
    <property type="term" value="P:positive regulation of natural killer cell chemotaxis"/>
    <property type="evidence" value="ECO:0000266"/>
    <property type="project" value="RGD"/>
</dbReference>
<dbReference type="GO" id="GO:0090023">
    <property type="term" value="P:positive regulation of neutrophil chemotaxis"/>
    <property type="evidence" value="ECO:0000266"/>
    <property type="project" value="RGD"/>
</dbReference>
<dbReference type="GO" id="GO:0051281">
    <property type="term" value="P:positive regulation of release of sequestered calcium ion into cytosol"/>
    <property type="evidence" value="ECO:0000266"/>
    <property type="project" value="RGD"/>
</dbReference>
<dbReference type="GO" id="GO:0010820">
    <property type="term" value="P:positive regulation of T cell chemotaxis"/>
    <property type="evidence" value="ECO:0000266"/>
    <property type="project" value="RGD"/>
</dbReference>
<dbReference type="GO" id="GO:0002726">
    <property type="term" value="P:positive regulation of T cell cytokine production"/>
    <property type="evidence" value="ECO:0000266"/>
    <property type="project" value="RGD"/>
</dbReference>
<dbReference type="GO" id="GO:0001916">
    <property type="term" value="P:positive regulation of T cell mediated cytotoxicity"/>
    <property type="evidence" value="ECO:0000266"/>
    <property type="project" value="RGD"/>
</dbReference>
<dbReference type="GO" id="GO:2000556">
    <property type="term" value="P:positive regulation of T-helper 1 cell cytokine production"/>
    <property type="evidence" value="ECO:0000266"/>
    <property type="project" value="RGD"/>
</dbReference>
<dbReference type="GO" id="GO:2000553">
    <property type="term" value="P:positive regulation of T-helper 2 cell cytokine production"/>
    <property type="evidence" value="ECO:0000266"/>
    <property type="project" value="RGD"/>
</dbReference>
<dbReference type="GO" id="GO:2000412">
    <property type="term" value="P:positive regulation of thymocyte migration"/>
    <property type="evidence" value="ECO:0000266"/>
    <property type="project" value="RGD"/>
</dbReference>
<dbReference type="GO" id="GO:0071636">
    <property type="term" value="P:positive regulation of transforming growth factor beta production"/>
    <property type="evidence" value="ECO:0000266"/>
    <property type="project" value="RGD"/>
</dbReference>
<dbReference type="GO" id="GO:0050727">
    <property type="term" value="P:regulation of inflammatory response"/>
    <property type="evidence" value="ECO:0000266"/>
    <property type="project" value="RGD"/>
</dbReference>
<dbReference type="GO" id="GO:0051209">
    <property type="term" value="P:release of sequestered calcium ion into cytosol"/>
    <property type="evidence" value="ECO:0000266"/>
    <property type="project" value="RGD"/>
</dbReference>
<dbReference type="GO" id="GO:0009615">
    <property type="term" value="P:response to virus"/>
    <property type="evidence" value="ECO:0000266"/>
    <property type="project" value="RGD"/>
</dbReference>
<dbReference type="CDD" id="cd00271">
    <property type="entry name" value="Chemokine_C"/>
    <property type="match status" value="1"/>
</dbReference>
<dbReference type="FunFam" id="2.40.50.40:FF:000023">
    <property type="entry name" value="Lymphotactin isoform X1"/>
    <property type="match status" value="1"/>
</dbReference>
<dbReference type="Gene3D" id="2.40.50.40">
    <property type="match status" value="1"/>
</dbReference>
<dbReference type="InterPro" id="IPR039809">
    <property type="entry name" value="Chemokine_b/g/d"/>
</dbReference>
<dbReference type="InterPro" id="IPR001811">
    <property type="entry name" value="Chemokine_IL8-like_dom"/>
</dbReference>
<dbReference type="InterPro" id="IPR008105">
    <property type="entry name" value="Chemokine_XCL1/XCL2"/>
</dbReference>
<dbReference type="InterPro" id="IPR036048">
    <property type="entry name" value="Interleukin_8-like_sf"/>
</dbReference>
<dbReference type="PANTHER" id="PTHR12015:SF101">
    <property type="entry name" value="CYTOKINE SCM-1 BETA-RELATED"/>
    <property type="match status" value="1"/>
</dbReference>
<dbReference type="PANTHER" id="PTHR12015">
    <property type="entry name" value="SMALL INDUCIBLE CYTOKINE A"/>
    <property type="match status" value="1"/>
</dbReference>
<dbReference type="Pfam" id="PF00048">
    <property type="entry name" value="IL8"/>
    <property type="match status" value="1"/>
</dbReference>
<dbReference type="PRINTS" id="PR01731">
    <property type="entry name" value="LYMPHOTACTIN"/>
</dbReference>
<dbReference type="SMART" id="SM00199">
    <property type="entry name" value="SCY"/>
    <property type="match status" value="1"/>
</dbReference>
<dbReference type="SUPFAM" id="SSF54117">
    <property type="entry name" value="Interleukin 8-like chemokines"/>
    <property type="match status" value="1"/>
</dbReference>
<gene>
    <name type="primary">Xcl1</name>
    <name type="synonym">Ltn</name>
    <name type="synonym">Scyc1</name>
</gene>
<evidence type="ECO:0000250" key="1"/>
<evidence type="ECO:0000250" key="2">
    <source>
        <dbReference type="UniProtKB" id="P47993"/>
    </source>
</evidence>
<evidence type="ECO:0000255" key="3"/>
<evidence type="ECO:0000256" key="4">
    <source>
        <dbReference type="SAM" id="MobiDB-lite"/>
    </source>
</evidence>
<evidence type="ECO:0000305" key="5"/>